<accession>P60623</accession>
<organism>
    <name type="scientific">Trimeresurus stejnegeri</name>
    <name type="common">Chinese green tree viper</name>
    <name type="synonym">Viridovipera stejnegeri</name>
    <dbReference type="NCBI Taxonomy" id="39682"/>
    <lineage>
        <taxon>Eukaryota</taxon>
        <taxon>Metazoa</taxon>
        <taxon>Chordata</taxon>
        <taxon>Craniata</taxon>
        <taxon>Vertebrata</taxon>
        <taxon>Euteleostomi</taxon>
        <taxon>Lepidosauria</taxon>
        <taxon>Squamata</taxon>
        <taxon>Bifurcata</taxon>
        <taxon>Unidentata</taxon>
        <taxon>Episquamata</taxon>
        <taxon>Toxicofera</taxon>
        <taxon>Serpentes</taxon>
        <taxon>Colubroidea</taxon>
        <taxon>Viperidae</taxon>
        <taxon>Crotalinae</taxon>
        <taxon>Trimeresurus</taxon>
    </lineage>
</organism>
<proteinExistence type="evidence at protein level"/>
<feature type="signal peptide" evidence="2">
    <location>
        <begin position="1" status="less than"/>
        <end position="12"/>
    </location>
</feature>
<feature type="chain" id="PRO_0000006290" description="Cysteine-rich venom protein">
    <location>
        <begin position="13"/>
        <end position="233"/>
    </location>
</feature>
<feature type="domain" description="SCP">
    <location>
        <begin position="31"/>
        <end position="159"/>
    </location>
</feature>
<feature type="domain" description="ShKT" evidence="3">
    <location>
        <begin position="195"/>
        <end position="228"/>
    </location>
</feature>
<feature type="disulfide bond" evidence="3 4">
    <location>
        <begin position="68"/>
        <end position="146"/>
    </location>
</feature>
<feature type="disulfide bond" evidence="3 4">
    <location>
        <begin position="85"/>
        <end position="160"/>
    </location>
</feature>
<feature type="disulfide bond" evidence="3 4">
    <location>
        <begin position="141"/>
        <end position="157"/>
    </location>
</feature>
<feature type="disulfide bond" evidence="3 4">
    <location>
        <begin position="179"/>
        <end position="186"/>
    </location>
</feature>
<feature type="disulfide bond" evidence="3 4">
    <location>
        <begin position="182"/>
        <end position="191"/>
    </location>
</feature>
<feature type="disulfide bond" evidence="3 4">
    <location>
        <begin position="195"/>
        <end position="228"/>
    </location>
</feature>
<feature type="disulfide bond" evidence="3 4">
    <location>
        <begin position="204"/>
        <end position="222"/>
    </location>
</feature>
<feature type="disulfide bond" evidence="3 4">
    <location>
        <begin position="213"/>
        <end position="226"/>
    </location>
</feature>
<feature type="non-terminal residue">
    <location>
        <position position="1"/>
    </location>
</feature>
<feature type="helix" evidence="6">
    <location>
        <begin position="17"/>
        <end position="19"/>
    </location>
</feature>
<feature type="helix" evidence="6">
    <location>
        <begin position="24"/>
        <end position="39"/>
    </location>
</feature>
<feature type="strand" evidence="6">
    <location>
        <begin position="45"/>
        <end position="47"/>
    </location>
</feature>
<feature type="helix" evidence="6">
    <location>
        <begin position="55"/>
        <end position="65"/>
    </location>
</feature>
<feature type="turn" evidence="6">
    <location>
        <begin position="66"/>
        <end position="68"/>
    </location>
</feature>
<feature type="helix" evidence="6">
    <location>
        <begin position="75"/>
        <end position="78"/>
    </location>
</feature>
<feature type="strand" evidence="6">
    <location>
        <begin position="86"/>
        <end position="94"/>
    </location>
</feature>
<feature type="helix" evidence="6">
    <location>
        <begin position="98"/>
        <end position="106"/>
    </location>
</feature>
<feature type="helix" evidence="6">
    <location>
        <begin position="107"/>
        <end position="111"/>
    </location>
</feature>
<feature type="turn" evidence="6">
    <location>
        <begin position="114"/>
        <end position="116"/>
    </location>
</feature>
<feature type="strand" evidence="6">
    <location>
        <begin position="117"/>
        <end position="120"/>
    </location>
</feature>
<feature type="helix" evidence="6">
    <location>
        <begin position="126"/>
        <end position="131"/>
    </location>
</feature>
<feature type="strand" evidence="6">
    <location>
        <begin position="138"/>
        <end position="145"/>
    </location>
</feature>
<feature type="strand" evidence="6">
    <location>
        <begin position="149"/>
        <end position="161"/>
    </location>
</feature>
<feature type="strand" evidence="6">
    <location>
        <begin position="175"/>
        <end position="177"/>
    </location>
</feature>
<feature type="turn" evidence="6">
    <location>
        <begin position="178"/>
        <end position="181"/>
    </location>
</feature>
<feature type="strand" evidence="6">
    <location>
        <begin position="185"/>
        <end position="187"/>
    </location>
</feature>
<feature type="helix" evidence="6">
    <location>
        <begin position="204"/>
        <end position="209"/>
    </location>
</feature>
<feature type="helix" evidence="6">
    <location>
        <begin position="216"/>
        <end position="221"/>
    </location>
</feature>
<feature type="helix" evidence="6">
    <location>
        <begin position="223"/>
        <end position="227"/>
    </location>
</feature>
<dbReference type="EMBL" id="AY423708">
    <property type="protein sequence ID" value="AAQ98964.1"/>
    <property type="molecule type" value="mRNA"/>
</dbReference>
<dbReference type="PDB" id="1RC9">
    <property type="method" value="X-ray"/>
    <property type="resolution" value="1.60 A"/>
    <property type="chains" value="A=13-233"/>
</dbReference>
<dbReference type="PDBsum" id="1RC9"/>
<dbReference type="SMR" id="P60623"/>
<dbReference type="EvolutionaryTrace" id="P60623"/>
<dbReference type="GO" id="GO:0005576">
    <property type="term" value="C:extracellular region"/>
    <property type="evidence" value="ECO:0007669"/>
    <property type="project" value="UniProtKB-SubCell"/>
</dbReference>
<dbReference type="GO" id="GO:0005246">
    <property type="term" value="F:calcium channel regulator activity"/>
    <property type="evidence" value="ECO:0007669"/>
    <property type="project" value="UniProtKB-KW"/>
</dbReference>
<dbReference type="GO" id="GO:0090729">
    <property type="term" value="F:toxin activity"/>
    <property type="evidence" value="ECO:0007669"/>
    <property type="project" value="UniProtKB-KW"/>
</dbReference>
<dbReference type="CDD" id="cd05383">
    <property type="entry name" value="CAP_CRISP"/>
    <property type="match status" value="1"/>
</dbReference>
<dbReference type="FunFam" id="1.10.10.740:FF:000001">
    <property type="entry name" value="Cysteine-rich secretory protein 2"/>
    <property type="match status" value="1"/>
</dbReference>
<dbReference type="FunFam" id="3.40.33.10:FF:000005">
    <property type="entry name" value="Cysteine-rich secretory protein 2"/>
    <property type="match status" value="1"/>
</dbReference>
<dbReference type="Gene3D" id="3.40.33.10">
    <property type="entry name" value="CAP"/>
    <property type="match status" value="1"/>
</dbReference>
<dbReference type="Gene3D" id="1.10.10.740">
    <property type="entry name" value="Crisp domain"/>
    <property type="match status" value="1"/>
</dbReference>
<dbReference type="InterPro" id="IPR018244">
    <property type="entry name" value="Allrgn_V5/Tpx1_CS"/>
</dbReference>
<dbReference type="InterPro" id="IPR014044">
    <property type="entry name" value="CAP_dom"/>
</dbReference>
<dbReference type="InterPro" id="IPR035940">
    <property type="entry name" value="CAP_sf"/>
</dbReference>
<dbReference type="InterPro" id="IPR042076">
    <property type="entry name" value="Crisp-like_dom"/>
</dbReference>
<dbReference type="InterPro" id="IPR001283">
    <property type="entry name" value="CRISP-related"/>
</dbReference>
<dbReference type="InterPro" id="IPR013871">
    <property type="entry name" value="Cysteine_rich_secretory"/>
</dbReference>
<dbReference type="InterPro" id="IPR034117">
    <property type="entry name" value="SCP_CRISP"/>
</dbReference>
<dbReference type="InterPro" id="IPR003582">
    <property type="entry name" value="ShKT_dom"/>
</dbReference>
<dbReference type="InterPro" id="IPR002413">
    <property type="entry name" value="V5_allergen-like"/>
</dbReference>
<dbReference type="PANTHER" id="PTHR10334">
    <property type="entry name" value="CYSTEINE-RICH SECRETORY PROTEIN-RELATED"/>
    <property type="match status" value="1"/>
</dbReference>
<dbReference type="Pfam" id="PF00188">
    <property type="entry name" value="CAP"/>
    <property type="match status" value="1"/>
</dbReference>
<dbReference type="Pfam" id="PF08562">
    <property type="entry name" value="Crisp"/>
    <property type="match status" value="1"/>
</dbReference>
<dbReference type="PRINTS" id="PR00838">
    <property type="entry name" value="V5ALLERGEN"/>
</dbReference>
<dbReference type="PRINTS" id="PR00837">
    <property type="entry name" value="V5TPXLIKE"/>
</dbReference>
<dbReference type="SMART" id="SM00198">
    <property type="entry name" value="SCP"/>
    <property type="match status" value="1"/>
</dbReference>
<dbReference type="SUPFAM" id="SSF57546">
    <property type="entry name" value="Crisp domain-like"/>
    <property type="match status" value="1"/>
</dbReference>
<dbReference type="SUPFAM" id="SSF55797">
    <property type="entry name" value="PR-1-like"/>
    <property type="match status" value="1"/>
</dbReference>
<dbReference type="PROSITE" id="PS01009">
    <property type="entry name" value="CRISP_1"/>
    <property type="match status" value="1"/>
</dbReference>
<dbReference type="PROSITE" id="PS01010">
    <property type="entry name" value="CRISP_2"/>
    <property type="match status" value="1"/>
</dbReference>
<dbReference type="PROSITE" id="PS51670">
    <property type="entry name" value="SHKT"/>
    <property type="match status" value="1"/>
</dbReference>
<keyword id="KW-0002">3D-structure</keyword>
<keyword id="KW-0108">Calcium channel impairing toxin</keyword>
<keyword id="KW-1015">Disulfide bond</keyword>
<keyword id="KW-0872">Ion channel impairing toxin</keyword>
<keyword id="KW-0528">Neurotoxin</keyword>
<keyword id="KW-0964">Secreted</keyword>
<keyword id="KW-0732">Signal</keyword>
<keyword id="KW-0800">Toxin</keyword>
<protein>
    <recommendedName>
        <fullName>Cysteine-rich venom protein</fullName>
        <shortName>CRVP</shortName>
    </recommendedName>
    <alternativeName>
        <fullName>Cysteine-rich secretory protein</fullName>
    </alternativeName>
    <alternativeName>
        <fullName>Stecrisp</fullName>
    </alternativeName>
</protein>
<name>CRVP_TRIST</name>
<comment type="function">
    <text evidence="1">Blocks contraction of smooth muscle elicited by high potassium-induced depolarization, but does not block caffeine-stimulated contraction. May target voltage-gated calcium channels on smooth muscle (By similarity).</text>
</comment>
<comment type="subcellular location">
    <subcellularLocation>
        <location>Secreted</location>
    </subcellularLocation>
</comment>
<comment type="tissue specificity">
    <text>Expressed by the venom gland.</text>
</comment>
<comment type="similarity">
    <text evidence="5">Belongs to the CRISP family.</text>
</comment>
<evidence type="ECO:0000250" key="1"/>
<evidence type="ECO:0000255" key="2"/>
<evidence type="ECO:0000255" key="3">
    <source>
        <dbReference type="PROSITE-ProRule" id="PRU01005"/>
    </source>
</evidence>
<evidence type="ECO:0000269" key="4">
    <source>
    </source>
</evidence>
<evidence type="ECO:0000305" key="5"/>
<evidence type="ECO:0007829" key="6">
    <source>
        <dbReference type="PDB" id="1RC9"/>
    </source>
</evidence>
<sequence length="233" mass="26294">PILAAVLQQSSGNVDFDSESPRKPEIQNEIVDLHNSLRRSVNPTASNMLRMEWYPEAADNAERWAYRCIESHSSYESRVIEGIKCGENIYMSPYPMKWTDIIHAWHDEYKDFKYGVGADPPNAVTGHYTQIVWYKSYRIGCAAAYCPSSPYSYFFVCQYCPAGNFIGKTATPYTSGTPCGDCPSDCDNGLCTNPCTRENKFTNCNTMVQQSSCQDNYMKTNCPASCFCQNKII</sequence>
<reference key="1">
    <citation type="submission" date="2003-09" db="EMBL/GenBank/DDBJ databases">
        <title>Purification and molecular cloning of a novel snake venom protein that belongs to CRISP family.</title>
        <authorList>
            <person name="Guo M."/>
            <person name="Teng M.-K."/>
            <person name="Niu L.-W."/>
        </authorList>
    </citation>
    <scope>NUCLEOTIDE SEQUENCE [MRNA]</scope>
    <source>
        <tissue>Venom gland</tissue>
    </source>
</reference>
<reference key="2">
    <citation type="journal article" date="2005" name="J. Biol. Chem.">
        <title>Crystal structure of the cysteine-rich secretory protein stecrisp reveals that the cysteine-rich domain has a K+ channel inhibitor-like fold.</title>
        <authorList>
            <person name="Guo M."/>
            <person name="Teng M.-K."/>
            <person name="Niu L.-W."/>
            <person name="Liu Q."/>
            <person name="Huang Q."/>
            <person name="Hao Q."/>
        </authorList>
    </citation>
    <scope>X-RAY CRYSTALLOGRAPHY (1.6 ANGSTROMS) OF 13-233</scope>
    <scope>DISULFIDE BONDS</scope>
    <source>
        <tissue>Venom</tissue>
    </source>
</reference>